<evidence type="ECO:0000255" key="1">
    <source>
        <dbReference type="HAMAP-Rule" id="MF_01358"/>
    </source>
</evidence>
<proteinExistence type="inferred from homology"/>
<protein>
    <recommendedName>
        <fullName evidence="1">NAD(P)H-quinone oxidoreductase subunit H</fullName>
        <ecNumber evidence="1">7.1.1.-</ecNumber>
    </recommendedName>
    <alternativeName>
        <fullName>NAD(P)H dehydrogenase subunit H</fullName>
    </alternativeName>
    <alternativeName>
        <fullName evidence="1">NADH-plastoquinone oxidoreductase subunit H</fullName>
    </alternativeName>
    <alternativeName>
        <fullName evidence="1">NDH-1 subunit H</fullName>
        <shortName evidence="1">NDH-H</shortName>
    </alternativeName>
</protein>
<name>NDHH_SYNS3</name>
<gene>
    <name evidence="1" type="primary">ndhH</name>
    <name type="ordered locus">sync_2648</name>
</gene>
<dbReference type="EC" id="7.1.1.-" evidence="1"/>
<dbReference type="EMBL" id="CP000435">
    <property type="protein sequence ID" value="ABI46334.1"/>
    <property type="molecule type" value="Genomic_DNA"/>
</dbReference>
<dbReference type="RefSeq" id="WP_011620540.1">
    <property type="nucleotide sequence ID" value="NC_008319.1"/>
</dbReference>
<dbReference type="SMR" id="Q0I6T6"/>
<dbReference type="STRING" id="64471.sync_2648"/>
<dbReference type="KEGG" id="syg:sync_2648"/>
<dbReference type="eggNOG" id="COG0649">
    <property type="taxonomic scope" value="Bacteria"/>
</dbReference>
<dbReference type="HOGENOM" id="CLU_015134_1_2_3"/>
<dbReference type="OrthoDB" id="9801496at2"/>
<dbReference type="Proteomes" id="UP000001961">
    <property type="component" value="Chromosome"/>
</dbReference>
<dbReference type="GO" id="GO:0031676">
    <property type="term" value="C:plasma membrane-derived thylakoid membrane"/>
    <property type="evidence" value="ECO:0007669"/>
    <property type="project" value="UniProtKB-SubCell"/>
</dbReference>
<dbReference type="GO" id="GO:0051287">
    <property type="term" value="F:NAD binding"/>
    <property type="evidence" value="ECO:0007669"/>
    <property type="project" value="InterPro"/>
</dbReference>
<dbReference type="GO" id="GO:0016655">
    <property type="term" value="F:oxidoreductase activity, acting on NAD(P)H, quinone or similar compound as acceptor"/>
    <property type="evidence" value="ECO:0007669"/>
    <property type="project" value="UniProtKB-UniRule"/>
</dbReference>
<dbReference type="GO" id="GO:0048038">
    <property type="term" value="F:quinone binding"/>
    <property type="evidence" value="ECO:0007669"/>
    <property type="project" value="UniProtKB-KW"/>
</dbReference>
<dbReference type="GO" id="GO:0019684">
    <property type="term" value="P:photosynthesis, light reaction"/>
    <property type="evidence" value="ECO:0007669"/>
    <property type="project" value="UniProtKB-UniRule"/>
</dbReference>
<dbReference type="Gene3D" id="1.10.645.10">
    <property type="entry name" value="Cytochrome-c3 Hydrogenase, chain B"/>
    <property type="match status" value="1"/>
</dbReference>
<dbReference type="HAMAP" id="MF_01358">
    <property type="entry name" value="NDH1_NuoD"/>
    <property type="match status" value="1"/>
</dbReference>
<dbReference type="InterPro" id="IPR001135">
    <property type="entry name" value="NADH_Q_OxRdtase_suD"/>
</dbReference>
<dbReference type="InterPro" id="IPR014029">
    <property type="entry name" value="NADH_UbQ_OxRdtase_49kDa_CS"/>
</dbReference>
<dbReference type="InterPro" id="IPR022885">
    <property type="entry name" value="NDH1_su_D/H"/>
</dbReference>
<dbReference type="InterPro" id="IPR029014">
    <property type="entry name" value="NiFe-Hase_large"/>
</dbReference>
<dbReference type="NCBIfam" id="NF004739">
    <property type="entry name" value="PRK06075.1"/>
    <property type="match status" value="1"/>
</dbReference>
<dbReference type="NCBIfam" id="NF005649">
    <property type="entry name" value="PRK07415.1"/>
    <property type="match status" value="1"/>
</dbReference>
<dbReference type="PANTHER" id="PTHR11993:SF10">
    <property type="entry name" value="NADH DEHYDROGENASE [UBIQUINONE] IRON-SULFUR PROTEIN 2, MITOCHONDRIAL"/>
    <property type="match status" value="1"/>
</dbReference>
<dbReference type="PANTHER" id="PTHR11993">
    <property type="entry name" value="NADH-UBIQUINONE OXIDOREDUCTASE 49 KDA SUBUNIT"/>
    <property type="match status" value="1"/>
</dbReference>
<dbReference type="Pfam" id="PF00346">
    <property type="entry name" value="Complex1_49kDa"/>
    <property type="match status" value="1"/>
</dbReference>
<dbReference type="SUPFAM" id="SSF56762">
    <property type="entry name" value="HydB/Nqo4-like"/>
    <property type="match status" value="1"/>
</dbReference>
<dbReference type="PROSITE" id="PS00535">
    <property type="entry name" value="COMPLEX1_49K"/>
    <property type="match status" value="1"/>
</dbReference>
<accession>Q0I6T6</accession>
<organism>
    <name type="scientific">Synechococcus sp. (strain CC9311)</name>
    <dbReference type="NCBI Taxonomy" id="64471"/>
    <lineage>
        <taxon>Bacteria</taxon>
        <taxon>Bacillati</taxon>
        <taxon>Cyanobacteriota</taxon>
        <taxon>Cyanophyceae</taxon>
        <taxon>Synechococcales</taxon>
        <taxon>Synechococcaceae</taxon>
        <taxon>Synechococcus</taxon>
    </lineage>
</organism>
<comment type="function">
    <text evidence="1">NDH-1 shuttles electrons from an unknown electron donor, via FMN and iron-sulfur (Fe-S) centers, to quinones in the respiratory and/or the photosynthetic chain. The immediate electron acceptor for the enzyme in this species is believed to be plastoquinone. Couples the redox reaction to proton translocation, and thus conserves the redox energy in a proton gradient. Cyanobacterial NDH-1 also plays a role in inorganic carbon-concentration.</text>
</comment>
<comment type="catalytic activity">
    <reaction evidence="1">
        <text>a plastoquinone + NADH + (n+1) H(+)(in) = a plastoquinol + NAD(+) + n H(+)(out)</text>
        <dbReference type="Rhea" id="RHEA:42608"/>
        <dbReference type="Rhea" id="RHEA-COMP:9561"/>
        <dbReference type="Rhea" id="RHEA-COMP:9562"/>
        <dbReference type="ChEBI" id="CHEBI:15378"/>
        <dbReference type="ChEBI" id="CHEBI:17757"/>
        <dbReference type="ChEBI" id="CHEBI:57540"/>
        <dbReference type="ChEBI" id="CHEBI:57945"/>
        <dbReference type="ChEBI" id="CHEBI:62192"/>
    </reaction>
</comment>
<comment type="catalytic activity">
    <reaction evidence="1">
        <text>a plastoquinone + NADPH + (n+1) H(+)(in) = a plastoquinol + NADP(+) + n H(+)(out)</text>
        <dbReference type="Rhea" id="RHEA:42612"/>
        <dbReference type="Rhea" id="RHEA-COMP:9561"/>
        <dbReference type="Rhea" id="RHEA-COMP:9562"/>
        <dbReference type="ChEBI" id="CHEBI:15378"/>
        <dbReference type="ChEBI" id="CHEBI:17757"/>
        <dbReference type="ChEBI" id="CHEBI:57783"/>
        <dbReference type="ChEBI" id="CHEBI:58349"/>
        <dbReference type="ChEBI" id="CHEBI:62192"/>
    </reaction>
</comment>
<comment type="subunit">
    <text evidence="1">NDH-1 can be composed of about 15 different subunits; different subcomplexes with different compositions have been identified which probably have different functions.</text>
</comment>
<comment type="subcellular location">
    <subcellularLocation>
        <location evidence="1">Cellular thylakoid membrane</location>
        <topology evidence="1">Peripheral membrane protein</topology>
        <orientation evidence="1">Cytoplasmic side</orientation>
    </subcellularLocation>
</comment>
<comment type="similarity">
    <text evidence="1">Belongs to the complex I 49 kDa subunit family.</text>
</comment>
<keyword id="KW-0472">Membrane</keyword>
<keyword id="KW-0520">NAD</keyword>
<keyword id="KW-0521">NADP</keyword>
<keyword id="KW-0618">Plastoquinone</keyword>
<keyword id="KW-0874">Quinone</keyword>
<keyword id="KW-1185">Reference proteome</keyword>
<keyword id="KW-0793">Thylakoid</keyword>
<keyword id="KW-1278">Translocase</keyword>
<keyword id="KW-0813">Transport</keyword>
<feature type="chain" id="PRO_0000371933" description="NAD(P)H-quinone oxidoreductase subunit H">
    <location>
        <begin position="1"/>
        <end position="394"/>
    </location>
</feature>
<reference key="1">
    <citation type="journal article" date="2006" name="Proc. Natl. Acad. Sci. U.S.A.">
        <title>Genome sequence of Synechococcus CC9311: insights into adaptation to a coastal environment.</title>
        <authorList>
            <person name="Palenik B."/>
            <person name="Ren Q."/>
            <person name="Dupont C.L."/>
            <person name="Myers G.S."/>
            <person name="Heidelberg J.F."/>
            <person name="Badger J.H."/>
            <person name="Madupu R."/>
            <person name="Nelson W.C."/>
            <person name="Brinkac L.M."/>
            <person name="Dodson R.J."/>
            <person name="Durkin A.S."/>
            <person name="Daugherty S.C."/>
            <person name="Sullivan S.A."/>
            <person name="Khouri H."/>
            <person name="Mohamoud Y."/>
            <person name="Halpin R."/>
            <person name="Paulsen I.T."/>
        </authorList>
    </citation>
    <scope>NUCLEOTIDE SEQUENCE [LARGE SCALE GENOMIC DNA]</scope>
    <source>
        <strain>CC9311</strain>
    </source>
</reference>
<sequence length="394" mass="45016">MTQLETRTEPMVVNFGPHHPSMHGVLRLVVTLDGEDVVDCEPVIGYLHRGMEKIAENRTNVMYVPYVSRMDYAAGMFYEAIVVNAPERLANIPVPKRASYIRVLMLELNRIANHLLWLGPFLADVGAQTPFFYIFREREMIYDLWEAATGQRLINNNYFRIGGVAADLPWGWLEKCKDFCDWFGPKIDEYEKLITNNPIFRRRIEGLGVIGREEAINWSLSGPMLRASGVPWDLRKVDHYECYDDFDWDVASEKEGDCFARYRVRIEEMRQSLKILRQACDMIPGGPTENLEAHRMAEGKDSAFAGFDYQYVAKKVAPTFKIPNGELYSRLESGKGEIGVFIQGNNDVTPWRFKIRAADSNNLQILPHILKGHKVADIMAILGSIDVIMGSVDR</sequence>